<dbReference type="EMBL" id="BC147241">
    <property type="protein sequence ID" value="AAI47242.1"/>
    <property type="molecule type" value="mRNA"/>
</dbReference>
<dbReference type="EMBL" id="BC147242">
    <property type="protein sequence ID" value="AAI47243.1"/>
    <property type="molecule type" value="mRNA"/>
</dbReference>
<dbReference type="CCDS" id="CCDS51729.1"/>
<dbReference type="RefSeq" id="NP_795987.2">
    <property type="nucleotide sequence ID" value="NM_177013.3"/>
</dbReference>
<dbReference type="FunCoup" id="B9EJI9">
    <property type="interactions" value="1"/>
</dbReference>
<dbReference type="STRING" id="10090.ENSMUSP00000116234"/>
<dbReference type="iPTMnet" id="B9EJI9"/>
<dbReference type="PhosphoSitePlus" id="B9EJI9"/>
<dbReference type="PaxDb" id="10090-ENSMUSP00000116234"/>
<dbReference type="ProteomicsDB" id="254626"/>
<dbReference type="Antibodypedia" id="55409">
    <property type="antibodies" value="49 antibodies from 11 providers"/>
</dbReference>
<dbReference type="Ensembl" id="ENSMUST00000127247.4">
    <property type="protein sequence ID" value="ENSMUSP00000116234.3"/>
    <property type="gene ID" value="ENSMUSG00000048022.12"/>
</dbReference>
<dbReference type="GeneID" id="319832"/>
<dbReference type="KEGG" id="mmu:319832"/>
<dbReference type="UCSC" id="uc009bcc.1">
    <property type="organism name" value="mouse"/>
</dbReference>
<dbReference type="AGR" id="MGI:2442812"/>
<dbReference type="CTD" id="730130"/>
<dbReference type="MGI" id="MGI:2442812">
    <property type="gene designation" value="Tmem229a"/>
</dbReference>
<dbReference type="VEuPathDB" id="HostDB:ENSMUSG00000048022"/>
<dbReference type="eggNOG" id="ENOG502QUNK">
    <property type="taxonomic scope" value="Eukaryota"/>
</dbReference>
<dbReference type="GeneTree" id="ENSGT00390000010899"/>
<dbReference type="HOGENOM" id="CLU_048581_0_0_1"/>
<dbReference type="InParanoid" id="B9EJI9"/>
<dbReference type="OMA" id="FHLVFYP"/>
<dbReference type="OrthoDB" id="9925611at2759"/>
<dbReference type="PhylomeDB" id="B9EJI9"/>
<dbReference type="TreeFam" id="TF336481"/>
<dbReference type="BioGRID-ORCS" id="319832">
    <property type="hits" value="2 hits in 75 CRISPR screens"/>
</dbReference>
<dbReference type="ChiTaRS" id="Tmem229a">
    <property type="organism name" value="mouse"/>
</dbReference>
<dbReference type="PRO" id="PR:B9EJI9"/>
<dbReference type="Proteomes" id="UP000000589">
    <property type="component" value="Chromosome 6"/>
</dbReference>
<dbReference type="RNAct" id="B9EJI9">
    <property type="molecule type" value="protein"/>
</dbReference>
<dbReference type="Bgee" id="ENSMUSG00000048022">
    <property type="expression patterns" value="Expressed in cerebellar nuclear complex and 127 other cell types or tissues"/>
</dbReference>
<dbReference type="GO" id="GO:0016020">
    <property type="term" value="C:membrane"/>
    <property type="evidence" value="ECO:0007669"/>
    <property type="project" value="UniProtKB-SubCell"/>
</dbReference>
<dbReference type="PANTHER" id="PTHR31746">
    <property type="entry name" value="TRANSMEMBRANE PROTEIN 229 FAMILY MEMBER"/>
    <property type="match status" value="1"/>
</dbReference>
<dbReference type="PANTHER" id="PTHR31746:SF2">
    <property type="entry name" value="TRANSMEMBRANE PROTEIN 229A"/>
    <property type="match status" value="1"/>
</dbReference>
<name>T229A_MOUSE</name>
<accession>B9EJI9</accession>
<proteinExistence type="evidence at transcript level"/>
<evidence type="ECO:0000255" key="1"/>
<evidence type="ECO:0000256" key="2">
    <source>
        <dbReference type="SAM" id="MobiDB-lite"/>
    </source>
</evidence>
<evidence type="ECO:0000305" key="3"/>
<feature type="chain" id="PRO_0000391849" description="Transmembrane protein 229A">
    <location>
        <begin position="1"/>
        <end position="371"/>
    </location>
</feature>
<feature type="transmembrane region" description="Helical" evidence="1">
    <location>
        <begin position="51"/>
        <end position="71"/>
    </location>
</feature>
<feature type="transmembrane region" description="Helical" evidence="1">
    <location>
        <begin position="117"/>
        <end position="137"/>
    </location>
</feature>
<feature type="transmembrane region" description="Helical" evidence="1">
    <location>
        <begin position="235"/>
        <end position="255"/>
    </location>
</feature>
<feature type="transmembrane region" description="Helical" evidence="1">
    <location>
        <begin position="269"/>
        <end position="289"/>
    </location>
</feature>
<feature type="transmembrane region" description="Helical" evidence="1">
    <location>
        <begin position="301"/>
        <end position="321"/>
    </location>
</feature>
<feature type="transmembrane region" description="Helical" evidence="1">
    <location>
        <begin position="334"/>
        <end position="354"/>
    </location>
</feature>
<feature type="region of interest" description="Disordered" evidence="2">
    <location>
        <begin position="1"/>
        <end position="30"/>
    </location>
</feature>
<comment type="subcellular location">
    <subcellularLocation>
        <location evidence="3">Membrane</location>
        <topology evidence="3">Multi-pass membrane protein</topology>
    </subcellularLocation>
</comment>
<comment type="similarity">
    <text evidence="3">Belongs to the TMEM229 family.</text>
</comment>
<keyword id="KW-0472">Membrane</keyword>
<keyword id="KW-1185">Reference proteome</keyword>
<keyword id="KW-0812">Transmembrane</keyword>
<keyword id="KW-1133">Transmembrane helix</keyword>
<organism>
    <name type="scientific">Mus musculus</name>
    <name type="common">Mouse</name>
    <dbReference type="NCBI Taxonomy" id="10090"/>
    <lineage>
        <taxon>Eukaryota</taxon>
        <taxon>Metazoa</taxon>
        <taxon>Chordata</taxon>
        <taxon>Craniata</taxon>
        <taxon>Vertebrata</taxon>
        <taxon>Euteleostomi</taxon>
        <taxon>Mammalia</taxon>
        <taxon>Eutheria</taxon>
        <taxon>Euarchontoglires</taxon>
        <taxon>Glires</taxon>
        <taxon>Rodentia</taxon>
        <taxon>Myomorpha</taxon>
        <taxon>Muroidea</taxon>
        <taxon>Muridae</taxon>
        <taxon>Murinae</taxon>
        <taxon>Mus</taxon>
        <taxon>Mus</taxon>
    </lineage>
</organism>
<sequence>MAGSDVASEGPSPRDGATRRPGATGGLRSQAAASCPEPLSAAEAPAERGALPAWMRLYFYGMHGITLDVLVSSARRFARSLDLRMLGFSSPYRCLLHSLTHFALEQLYLQRPRCPSAFLFNFLLYPSAHVGLQTLAGQALRLSLGGGPGGAAAPALGALDLALQYVLALYHGQVFLKRFLCLRYPRRRDQHTRDTLPAARDAQILWEAGGQRRGPGGARGTERSPTQGLPDLLRFLFFGMHGFLDEIFFTFFFNVLGQGDRASSGHTSLWSFFMYGSCSFVVEKLYFHLHYSRGWGTWKRVPIYVIFIYAWEFSWGLGLRMCGACSWDYSHYPLNFMGLITLMYLPGWLFLSVYQDLLSNVLWRVQYVPTN</sequence>
<reference key="1">
    <citation type="journal article" date="2004" name="Genome Res.">
        <title>The status, quality, and expansion of the NIH full-length cDNA project: the Mammalian Gene Collection (MGC).</title>
        <authorList>
            <consortium name="The MGC Project Team"/>
        </authorList>
    </citation>
    <scope>NUCLEOTIDE SEQUENCE [LARGE SCALE MRNA]</scope>
    <source>
        <tissue>Brain</tissue>
    </source>
</reference>
<gene>
    <name type="primary">Tmem229a</name>
</gene>
<protein>
    <recommendedName>
        <fullName>Transmembrane protein 229A</fullName>
    </recommendedName>
</protein>